<reference key="1">
    <citation type="journal article" date="1997" name="Yeast">
        <title>Tandemly repeated 147 bp elements cause structural and functional variation in divergent MAL promoters of Saccharomyces cerevisiae.</title>
        <authorList>
            <person name="Bell P.J."/>
            <person name="Higgins V.J."/>
            <person name="Dawes I.W."/>
            <person name="Bissinger P.H."/>
        </authorList>
    </citation>
    <scope>NUCLEOTIDE SEQUENCE [GENOMIC DNA]</scope>
    <source>
        <strain>N1</strain>
    </source>
</reference>
<reference key="2">
    <citation type="journal article" date="1994" name="EMBO J.">
        <title>Complete DNA sequence of yeast chromosome II.</title>
        <authorList>
            <person name="Feldmann H."/>
            <person name="Aigle M."/>
            <person name="Aljinovic G."/>
            <person name="Andre B."/>
            <person name="Baclet M.C."/>
            <person name="Barthe C."/>
            <person name="Baur A."/>
            <person name="Becam A.-M."/>
            <person name="Biteau N."/>
            <person name="Boles E."/>
            <person name="Brandt T."/>
            <person name="Brendel M."/>
            <person name="Brueckner M."/>
            <person name="Bussereau F."/>
            <person name="Christiansen C."/>
            <person name="Contreras R."/>
            <person name="Crouzet M."/>
            <person name="Cziepluch C."/>
            <person name="Demolis N."/>
            <person name="Delaveau T."/>
            <person name="Doignon F."/>
            <person name="Domdey H."/>
            <person name="Duesterhus S."/>
            <person name="Dubois E."/>
            <person name="Dujon B."/>
            <person name="El Bakkoury M."/>
            <person name="Entian K.-D."/>
            <person name="Feuermann M."/>
            <person name="Fiers W."/>
            <person name="Fobo G.M."/>
            <person name="Fritz C."/>
            <person name="Gassenhuber J."/>
            <person name="Glansdorff N."/>
            <person name="Goffeau A."/>
            <person name="Grivell L.A."/>
            <person name="de Haan M."/>
            <person name="Hein C."/>
            <person name="Herbert C.J."/>
            <person name="Hollenberg C.P."/>
            <person name="Holmstroem K."/>
            <person name="Jacq C."/>
            <person name="Jacquet M."/>
            <person name="Jauniaux J.-C."/>
            <person name="Jonniaux J.-L."/>
            <person name="Kallesoee T."/>
            <person name="Kiesau P."/>
            <person name="Kirchrath L."/>
            <person name="Koetter P."/>
            <person name="Korol S."/>
            <person name="Liebl S."/>
            <person name="Logghe M."/>
            <person name="Lohan A.J.E."/>
            <person name="Louis E.J."/>
            <person name="Li Z.Y."/>
            <person name="Maat M.J."/>
            <person name="Mallet L."/>
            <person name="Mannhaupt G."/>
            <person name="Messenguy F."/>
            <person name="Miosga T."/>
            <person name="Molemans F."/>
            <person name="Mueller S."/>
            <person name="Nasr F."/>
            <person name="Obermaier B."/>
            <person name="Perea J."/>
            <person name="Pierard A."/>
            <person name="Piravandi E."/>
            <person name="Pohl F.M."/>
            <person name="Pohl T.M."/>
            <person name="Potier S."/>
            <person name="Proft M."/>
            <person name="Purnelle B."/>
            <person name="Ramezani Rad M."/>
            <person name="Rieger M."/>
            <person name="Rose M."/>
            <person name="Schaaff-Gerstenschlaeger I."/>
            <person name="Scherens B."/>
            <person name="Schwarzlose C."/>
            <person name="Skala J."/>
            <person name="Slonimski P.P."/>
            <person name="Smits P.H.M."/>
            <person name="Souciet J.-L."/>
            <person name="Steensma H.Y."/>
            <person name="Stucka R."/>
            <person name="Urrestarazu L.A."/>
            <person name="van der Aart Q.J.M."/>
            <person name="Van Dyck L."/>
            <person name="Vassarotti A."/>
            <person name="Vetter I."/>
            <person name="Vierendeels F."/>
            <person name="Vissers S."/>
            <person name="Wagner G."/>
            <person name="de Wergifosse P."/>
            <person name="Wolfe K.H."/>
            <person name="Zagulski M."/>
            <person name="Zimmermann F.K."/>
            <person name="Mewes H.-W."/>
            <person name="Kleine K."/>
        </authorList>
    </citation>
    <scope>NUCLEOTIDE SEQUENCE [LARGE SCALE GENOMIC DNA]</scope>
    <source>
        <strain>ATCC 204508 / S288c</strain>
    </source>
</reference>
<reference key="3">
    <citation type="journal article" date="2014" name="G3 (Bethesda)">
        <title>The reference genome sequence of Saccharomyces cerevisiae: Then and now.</title>
        <authorList>
            <person name="Engel S.R."/>
            <person name="Dietrich F.S."/>
            <person name="Fisk D.G."/>
            <person name="Binkley G."/>
            <person name="Balakrishnan R."/>
            <person name="Costanzo M.C."/>
            <person name="Dwight S.S."/>
            <person name="Hitz B.C."/>
            <person name="Karra K."/>
            <person name="Nash R.S."/>
            <person name="Weng S."/>
            <person name="Wong E.D."/>
            <person name="Lloyd P."/>
            <person name="Skrzypek M.S."/>
            <person name="Miyasato S.R."/>
            <person name="Simison M."/>
            <person name="Cherry J.M."/>
        </authorList>
    </citation>
    <scope>GENOME REANNOTATION</scope>
    <source>
        <strain>ATCC 204508 / S288c</strain>
    </source>
</reference>
<reference key="4">
    <citation type="journal article" date="2002" name="Nat. Biotechnol.">
        <title>An integrated approach for finding overlooked genes in yeast.</title>
        <authorList>
            <person name="Kumar A."/>
            <person name="Harrison P.M."/>
            <person name="Cheung K.-H."/>
            <person name="Lan N."/>
            <person name="Echols N."/>
            <person name="Bertone P."/>
            <person name="Miller P."/>
            <person name="Gerstein M.B."/>
            <person name="Snyder M."/>
        </authorList>
    </citation>
    <scope>NUCLEOTIDE SEQUENCE [GENOMIC DNA]</scope>
</reference>
<reference key="5">
    <citation type="journal article" date="2009" name="Mol. Syst. Biol.">
        <title>Global analysis of the glycoproteome in Saccharomyces cerevisiae reveals new roles for protein glycosylation in eukaryotes.</title>
        <authorList>
            <person name="Kung L.A."/>
            <person name="Tao S.-C."/>
            <person name="Qian J."/>
            <person name="Smith M.G."/>
            <person name="Snyder M."/>
            <person name="Zhu H."/>
        </authorList>
    </citation>
    <scope>GLYCOSYLATION [LARGE SCALE ANALYSIS]</scope>
</reference>
<proteinExistence type="evidence at protein level"/>
<dbReference type="EMBL" id="U86359">
    <property type="protein sequence ID" value="AAB71423.1"/>
    <property type="molecule type" value="Genomic_DNA"/>
</dbReference>
<dbReference type="EMBL" id="U86360">
    <property type="protein sequence ID" value="AAB71424.1"/>
    <property type="molecule type" value="Genomic_DNA"/>
</dbReference>
<dbReference type="EMBL" id="U86361">
    <property type="protein sequence ID" value="AAB71425.1"/>
    <property type="molecule type" value="Genomic_DNA"/>
</dbReference>
<dbReference type="EMBL" id="U86362">
    <property type="protein sequence ID" value="AAB71426.1"/>
    <property type="molecule type" value="Genomic_DNA"/>
</dbReference>
<dbReference type="EMBL" id="Z36168">
    <property type="status" value="NOT_ANNOTATED_CDS"/>
    <property type="molecule type" value="Genomic_DNA"/>
</dbReference>
<dbReference type="EMBL" id="AF479989">
    <property type="protein sequence ID" value="AAL79302.1"/>
    <property type="molecule type" value="Genomic_DNA"/>
</dbReference>
<dbReference type="EMBL" id="BK006936">
    <property type="protein sequence ID" value="DAA07414.1"/>
    <property type="molecule type" value="Genomic_DNA"/>
</dbReference>
<dbReference type="RefSeq" id="NP_878056.1">
    <property type="nucleotide sequence ID" value="NM_001184588.1"/>
</dbReference>
<dbReference type="BioGRID" id="36994">
    <property type="interactions" value="64"/>
</dbReference>
<dbReference type="FunCoup" id="Q8TGK4">
    <property type="interactions" value="12"/>
</dbReference>
<dbReference type="STRING" id="4932.YBR298C-A"/>
<dbReference type="PaxDb" id="4932-YBR298C-A"/>
<dbReference type="EnsemblFungi" id="YBR298C-A_mRNA">
    <property type="protein sequence ID" value="YBR298C-A"/>
    <property type="gene ID" value="YBR298C-A"/>
</dbReference>
<dbReference type="GeneID" id="1466452"/>
<dbReference type="KEGG" id="sce:YBR298C-A"/>
<dbReference type="AGR" id="SGD:S000028606"/>
<dbReference type="SGD" id="S000028606">
    <property type="gene designation" value="YBR298C-A"/>
</dbReference>
<dbReference type="VEuPathDB" id="FungiDB:YBR298C-A"/>
<dbReference type="GeneTree" id="ENSGT01000000222129"/>
<dbReference type="HOGENOM" id="CLU_2706255_0_0_1"/>
<dbReference type="InParanoid" id="Q8TGK4"/>
<dbReference type="OrthoDB" id="10344809at2759"/>
<dbReference type="BioCyc" id="YEAST:G3O-29266-MONOMER"/>
<dbReference type="PRO" id="PR:Q8TGK4"/>
<dbReference type="Proteomes" id="UP000002311">
    <property type="component" value="Chromosome II"/>
</dbReference>
<dbReference type="RNAct" id="Q8TGK4">
    <property type="molecule type" value="protein"/>
</dbReference>
<comment type="PTM">
    <text evidence="1">N-glycosylated.</text>
</comment>
<sequence length="73" mass="8407">MELFIPCPERLKKMMLKEELRKELLILRCLYHPTIQIMLPTLGTLGTEKRKEKYALSLFEPILNCVGSAKTSG</sequence>
<evidence type="ECO:0000269" key="1">
    <source>
    </source>
</evidence>
<evidence type="ECO:0000305" key="2"/>
<organism>
    <name type="scientific">Saccharomyces cerevisiae (strain ATCC 204508 / S288c)</name>
    <name type="common">Baker's yeast</name>
    <dbReference type="NCBI Taxonomy" id="559292"/>
    <lineage>
        <taxon>Eukaryota</taxon>
        <taxon>Fungi</taxon>
        <taxon>Dikarya</taxon>
        <taxon>Ascomycota</taxon>
        <taxon>Saccharomycotina</taxon>
        <taxon>Saccharomycetes</taxon>
        <taxon>Saccharomycetales</taxon>
        <taxon>Saccharomycetaceae</taxon>
        <taxon>Saccharomyces</taxon>
    </lineage>
</organism>
<protein>
    <recommendedName>
        <fullName>Uncharacterized protein YBR298C-A</fullName>
    </recommendedName>
</protein>
<feature type="chain" id="PRO_0000248446" description="Uncharacterized protein YBR298C-A">
    <location>
        <begin position="1"/>
        <end position="73"/>
    </location>
</feature>
<feature type="sequence conflict" description="In Ref. 1; AAB71423/AAB71424/AAB71425/AAB71426." evidence="2" ref="1">
    <original>E</original>
    <variation>K</variation>
    <location>
        <position position="48"/>
    </location>
</feature>
<name>YB298_YEAST</name>
<gene>
    <name type="ordered locus">YBR298C-A</name>
</gene>
<accession>Q8TGK4</accession>
<accession>D6VQU4</accession>
<accession>P90467</accession>
<keyword id="KW-1185">Reference proteome</keyword>